<feature type="chain" id="PRO_0000448711" description="Protein Daple">
    <location>
        <begin position="1"/>
        <end position="2023"/>
    </location>
</feature>
<feature type="domain" description="Calponin-homology (CH)" evidence="4">
    <location>
        <begin position="11"/>
        <end position="131"/>
    </location>
</feature>
<feature type="region of interest" description="Disordered" evidence="5">
    <location>
        <begin position="1013"/>
        <end position="1035"/>
    </location>
</feature>
<feature type="region of interest" description="Disordered" evidence="5">
    <location>
        <begin position="1441"/>
        <end position="1824"/>
    </location>
</feature>
<feature type="region of interest" description="Disordered" evidence="5">
    <location>
        <begin position="1837"/>
        <end position="2023"/>
    </location>
</feature>
<feature type="coiled-coil region" evidence="3">
    <location>
        <begin position="250"/>
        <end position="415"/>
    </location>
</feature>
<feature type="coiled-coil region" evidence="3">
    <location>
        <begin position="458"/>
        <end position="1064"/>
    </location>
</feature>
<feature type="coiled-coil region" evidence="3">
    <location>
        <begin position="1105"/>
        <end position="1419"/>
    </location>
</feature>
<feature type="short sequence motif" description="GBA" evidence="2">
    <location>
        <begin position="1700"/>
        <end position="1728"/>
    </location>
</feature>
<feature type="short sequence motif" description="PDZ-binding" evidence="3">
    <location>
        <begin position="2020"/>
        <end position="2023"/>
    </location>
</feature>
<feature type="compositionally biased region" description="Polar residues" evidence="5">
    <location>
        <begin position="1022"/>
        <end position="1033"/>
    </location>
</feature>
<feature type="compositionally biased region" description="Basic and acidic residues" evidence="5">
    <location>
        <begin position="1442"/>
        <end position="1460"/>
    </location>
</feature>
<feature type="compositionally biased region" description="Pro residues" evidence="5">
    <location>
        <begin position="1478"/>
        <end position="1491"/>
    </location>
</feature>
<feature type="compositionally biased region" description="Polar residues" evidence="5">
    <location>
        <begin position="1497"/>
        <end position="1518"/>
    </location>
</feature>
<feature type="compositionally biased region" description="Polar residues" evidence="5">
    <location>
        <begin position="1564"/>
        <end position="1585"/>
    </location>
</feature>
<feature type="compositionally biased region" description="Low complexity" evidence="5">
    <location>
        <begin position="1623"/>
        <end position="1643"/>
    </location>
</feature>
<feature type="compositionally biased region" description="Low complexity" evidence="5">
    <location>
        <begin position="1667"/>
        <end position="1704"/>
    </location>
</feature>
<feature type="compositionally biased region" description="Polar residues" evidence="5">
    <location>
        <begin position="1714"/>
        <end position="1727"/>
    </location>
</feature>
<feature type="compositionally biased region" description="Polar residues" evidence="5">
    <location>
        <begin position="1752"/>
        <end position="1763"/>
    </location>
</feature>
<feature type="compositionally biased region" description="Polar residues" evidence="5">
    <location>
        <begin position="1785"/>
        <end position="1799"/>
    </location>
</feature>
<feature type="compositionally biased region" description="Polar residues" evidence="5">
    <location>
        <begin position="1809"/>
        <end position="1824"/>
    </location>
</feature>
<feature type="compositionally biased region" description="Basic and acidic residues" evidence="5">
    <location>
        <begin position="1890"/>
        <end position="1904"/>
    </location>
</feature>
<feature type="compositionally biased region" description="Low complexity" evidence="5">
    <location>
        <begin position="1927"/>
        <end position="1945"/>
    </location>
</feature>
<feature type="compositionally biased region" description="Basic and acidic residues" evidence="5">
    <location>
        <begin position="1974"/>
        <end position="1988"/>
    </location>
</feature>
<feature type="compositionally biased region" description="Polar residues" evidence="5">
    <location>
        <begin position="1989"/>
        <end position="2014"/>
    </location>
</feature>
<feature type="splice variant" id="VSP_060436" description="In isoform 2." evidence="8">
    <location>
        <begin position="1065"/>
        <end position="1090"/>
    </location>
</feature>
<evidence type="ECO:0000250" key="1">
    <source>
        <dbReference type="UniProtKB" id="P85120"/>
    </source>
</evidence>
<evidence type="ECO:0000250" key="2">
    <source>
        <dbReference type="UniProtKB" id="Q9P219"/>
    </source>
</evidence>
<evidence type="ECO:0000255" key="3"/>
<evidence type="ECO:0000255" key="4">
    <source>
        <dbReference type="PROSITE-ProRule" id="PRU00044"/>
    </source>
</evidence>
<evidence type="ECO:0000256" key="5">
    <source>
        <dbReference type="SAM" id="MobiDB-lite"/>
    </source>
</evidence>
<evidence type="ECO:0000269" key="6">
    <source>
    </source>
</evidence>
<evidence type="ECO:0000303" key="7">
    <source>
    </source>
</evidence>
<evidence type="ECO:0000305" key="8"/>
<evidence type="ECO:0000312" key="9">
    <source>
        <dbReference type="EMBL" id="AAH76506.1"/>
    </source>
</evidence>
<evidence type="ECO:0000312" key="10">
    <source>
        <dbReference type="Proteomes" id="UP000000437"/>
    </source>
</evidence>
<evidence type="ECO:0000312" key="11">
    <source>
        <dbReference type="ZFIN" id="ZDB-GENE-100419-3"/>
    </source>
</evidence>
<sequence length="2023" mass="230337">MDITVSELMSNFMDSPLVVWVKTFGPLGFSSEDKLSMFMDLVDGVFLHKIMTHIDPSPMNQRVNKQVNNDVNLRIQNLNTVIRHIKNYYQEHLQQLIVMNLPNVLAIAKDPLSGKSMEEMKRMLLLILGCAVQCDRKEEIIEKIKLLDIETQAAIVTHIQEVTHNQENVLDLQWMEVAEIPAEQLDPLSRTMAFHLRKLIDERDESAELVIELTQERDYLQSQQPSGLLGFPSPERTSLSPITLLSKEDRQHLAVELADTKAKLRRSRQELEEKTEQLIDAKNEIERLDSDIQKLKQENTQLLAEARSVRAYRDEVDSLRERAGKVDRLETELSRFKEKLNDVHFYKTRIEELREDNLTLLETKSMLEEQLTGARGRCDKLHELEKENLQLRSKLHDIEIDRDSDKKRLEELLEENMLLEISQKQSMNESAHLGWELEQLAKNNEVNEARKSFVFELNESASSRLLKLEKENQCLQSTIQELREASINMEEGQLHSLELEKENQSLSKKLERLQSQLDQEKQTTQDMENLGEELIKEKQRMEKTLETIQAEKDRQISELEQEKEHLTQAVSSLRKRAQANSEARVREVETENRILHQTISETGGKLARLEAEKRQVTKELESLRERGERCEELEREVPRLERVREQLQREAAALKIGSERAEALERENATLEQDNRRLKKLADTAQNATLRLAVLEKDHQQLEEENLEQRRALETLRPAAARLAQLQQEHAELEREHEEMCRTMEELRSQAKRSERLEKSCGSLSLENQRLQQTLENSSTKMQGLESELRQNEAEMKDLQRELEGLRQKVTWAETLEKENRGMEQELSQLEKEKKQLEKEARRFRQQLEVKEAALEENCLRLASMEKEGTALSKELGRVKEAAGRLKELERENKDLQKQATMDKKTLATLREELVNEKLRVQQQCNELEKLSHELEKIGLNREKLLQEEHSCEDNKYKILETKIESALKKTLELREEKIQSLESRLEESSSLNQQLRTELTTVKKNLEALKQRHEEEAAHSEISQQTLGQTRSLPDKEKWEMEQREATAELLKLKDRLIDVEKNVRQRHVSIDIHRVIFSIVICFCDSLQNAALQTEKYLLKDQLKQIDSQNAQLNAQTLALQKQAASLQEHNTSLHKETAKLQVENSTLSSQSSSLMAQYGALQAQLQTLESEAESLQKQREEASAARDRVTQDHERLLGVHERQASEYEQLIAQHAALKASQRALEQENRTLENKYMVLLKQKDAMEALEESLQRDRESLGEEIRKNTLILGENRSLREEVDRVSHMHTQLRQEYDSLQLQTKELKTSLNESQLELNRWQARYDQLKEQHQGLDISMTKLDNHCELLTRLKGNLEEENHHLLSQIQMLSQQNQTLLERTMESKELYHEEQKQYIDKLNSLRRQKEKLEEKIMDQYKFYDPTPKKSRQWVGAKAIAKFIKPKKESSRERPDAPRERIRSAPDIPLPEIPTCIDCPESAPPPPPPPLPPRQSRPSLDSMNSQSVEENHVQSPTLSSPALNGRVLNESGGSRSRDGYRSIGGGSESMNGYEELLRWRSREPGGATCSTPLSRNSHNAPGFTSSSSLRPGRRPKGLVSEEDLRHHSPDAGFGSGVHGNTGHRPSSAEFSRNTSSSNSPVSSKGSLDCLQGRSASLSSDDVVGLAHEGSRLSQSSLLPRSSTLPCDSPSASRPSQRPASRRPSSPGSEMVTLEEFLQESNALSPPTVQTGSREDLMTDYFTRSTRPVPLRDGAKTPTNYVTPTVKTTPPELDARTPKPGHSVKPSVRLTDTSTPPSHSQTLPNRGAGLRPSALQQSSPRGSVGGSASLSRTFSLASADLLRSNGPDSYRTEAASPNQNDVVMRRPGAVARERPMSARVTGSSPLPGDPGHISVDPRRLSLAQPRDEFSLVSPPPLHSSSMSLQAEREYVGSGSSRAGAARSGSAQPRGAPHRGEVAMVTPVRAVPALRLNDLEEEPQEQREAESPLLKKADTTNLSYASKEQPTSKPASPDPNNDPQTVWYEYGCV</sequence>
<dbReference type="EMBL" id="BX530029">
    <property type="status" value="NOT_ANNOTATED_CDS"/>
    <property type="molecule type" value="Genomic_DNA"/>
</dbReference>
<dbReference type="EMBL" id="BC076506">
    <property type="protein sequence ID" value="AAH76506.1"/>
    <property type="molecule type" value="mRNA"/>
</dbReference>
<dbReference type="RefSeq" id="NP_001410799.1">
    <molecule id="A0A2R8QCI3-2"/>
    <property type="nucleotide sequence ID" value="NM_001423870.1"/>
</dbReference>
<dbReference type="SMR" id="A0A2R8QCI3"/>
<dbReference type="FunCoup" id="A0A2R8QCI3">
    <property type="interactions" value="1269"/>
</dbReference>
<dbReference type="STRING" id="7955.ENSDARP00000062009"/>
<dbReference type="PaxDb" id="7955-ENSDARP00000062009"/>
<dbReference type="Ensembl" id="ENSDART00000187996">
    <molecule id="A0A2R8QCI3-1"/>
    <property type="protein sequence ID" value="ENSDARP00000149375"/>
    <property type="gene ID" value="ENSDARG00000053713"/>
</dbReference>
<dbReference type="AGR" id="ZFIN:ZDB-GENE-100419-3"/>
<dbReference type="ZFIN" id="ZDB-GENE-100419-3">
    <property type="gene designation" value="ccdc88c"/>
</dbReference>
<dbReference type="eggNOG" id="KOG4643">
    <property type="taxonomic scope" value="Eukaryota"/>
</dbReference>
<dbReference type="HOGENOM" id="CLU_001421_1_0_1"/>
<dbReference type="InParanoid" id="A0A2R8QCI3"/>
<dbReference type="OMA" id="RHNASDP"/>
<dbReference type="OrthoDB" id="10254988at2759"/>
<dbReference type="TreeFam" id="TF320231"/>
<dbReference type="PRO" id="PR:A0A2R8QCI3"/>
<dbReference type="Proteomes" id="UP000000437">
    <property type="component" value="Chromosome 17"/>
</dbReference>
<dbReference type="Bgee" id="ENSDARG00000053713">
    <property type="expression patterns" value="Expressed in mature ovarian follicle and 27 other cell types or tissues"/>
</dbReference>
<dbReference type="ExpressionAtlas" id="A0A2R8QCI3">
    <property type="expression patterns" value="baseline and differential"/>
</dbReference>
<dbReference type="GO" id="GO:0070161">
    <property type="term" value="C:anchoring junction"/>
    <property type="evidence" value="ECO:0007669"/>
    <property type="project" value="UniProtKB-SubCell"/>
</dbReference>
<dbReference type="GO" id="GO:0030054">
    <property type="term" value="C:cell junction"/>
    <property type="evidence" value="ECO:0000250"/>
    <property type="project" value="UniProtKB"/>
</dbReference>
<dbReference type="GO" id="GO:0005813">
    <property type="term" value="C:centrosome"/>
    <property type="evidence" value="ECO:0000318"/>
    <property type="project" value="GO_Central"/>
</dbReference>
<dbReference type="GO" id="GO:0005737">
    <property type="term" value="C:cytoplasm"/>
    <property type="evidence" value="ECO:0000250"/>
    <property type="project" value="UniProtKB"/>
</dbReference>
<dbReference type="GO" id="GO:0051959">
    <property type="term" value="F:dynein light intermediate chain binding"/>
    <property type="evidence" value="ECO:0000318"/>
    <property type="project" value="GO_Central"/>
</dbReference>
<dbReference type="GO" id="GO:0001965">
    <property type="term" value="F:G-protein alpha-subunit binding"/>
    <property type="evidence" value="ECO:0000250"/>
    <property type="project" value="UniProtKB"/>
</dbReference>
<dbReference type="GO" id="GO:0005085">
    <property type="term" value="F:guanyl-nucleotide exchange factor activity"/>
    <property type="evidence" value="ECO:0000314"/>
    <property type="project" value="UniProtKB"/>
</dbReference>
<dbReference type="GO" id="GO:0008017">
    <property type="term" value="F:microtubule binding"/>
    <property type="evidence" value="ECO:0000318"/>
    <property type="project" value="GO_Central"/>
</dbReference>
<dbReference type="GO" id="GO:0003383">
    <property type="term" value="P:apical constriction"/>
    <property type="evidence" value="ECO:0000250"/>
    <property type="project" value="UniProtKB"/>
</dbReference>
<dbReference type="GO" id="GO:0031122">
    <property type="term" value="P:cytoplasmic microtubule organization"/>
    <property type="evidence" value="ECO:0000318"/>
    <property type="project" value="GO_Central"/>
</dbReference>
<dbReference type="GO" id="GO:0030705">
    <property type="term" value="P:cytoskeleton-dependent intracellular transport"/>
    <property type="evidence" value="ECO:0000318"/>
    <property type="project" value="GO_Central"/>
</dbReference>
<dbReference type="GO" id="GO:0001841">
    <property type="term" value="P:neural tube formation"/>
    <property type="evidence" value="ECO:0000315"/>
    <property type="project" value="UniProtKB"/>
</dbReference>
<dbReference type="GO" id="GO:0007264">
    <property type="term" value="P:small GTPase-mediated signal transduction"/>
    <property type="evidence" value="ECO:0000314"/>
    <property type="project" value="UniProtKB"/>
</dbReference>
<dbReference type="GO" id="GO:0016055">
    <property type="term" value="P:Wnt signaling pathway"/>
    <property type="evidence" value="ECO:0007669"/>
    <property type="project" value="UniProtKB-KW"/>
</dbReference>
<dbReference type="CDD" id="cd22228">
    <property type="entry name" value="HkD_Daple"/>
    <property type="match status" value="1"/>
</dbReference>
<dbReference type="FunFam" id="1.10.418.10:FF:000035">
    <property type="entry name" value="girdin isoform X1"/>
    <property type="match status" value="1"/>
</dbReference>
<dbReference type="Gene3D" id="1.10.287.1490">
    <property type="match status" value="1"/>
</dbReference>
<dbReference type="Gene3D" id="6.10.250.3110">
    <property type="match status" value="1"/>
</dbReference>
<dbReference type="Gene3D" id="1.10.418.10">
    <property type="entry name" value="Calponin-like domain"/>
    <property type="match status" value="1"/>
</dbReference>
<dbReference type="InterPro" id="IPR001715">
    <property type="entry name" value="CH_dom"/>
</dbReference>
<dbReference type="InterPro" id="IPR036872">
    <property type="entry name" value="CH_dom_sf"/>
</dbReference>
<dbReference type="InterPro" id="IPR043936">
    <property type="entry name" value="HOOK_N"/>
</dbReference>
<dbReference type="PANTHER" id="PTHR18947">
    <property type="entry name" value="HOOK PROTEINS"/>
    <property type="match status" value="1"/>
</dbReference>
<dbReference type="PANTHER" id="PTHR18947:SF31">
    <property type="entry name" value="PROTEIN DAPLE"/>
    <property type="match status" value="1"/>
</dbReference>
<dbReference type="Pfam" id="PF19047">
    <property type="entry name" value="HOOK_N"/>
    <property type="match status" value="1"/>
</dbReference>
<dbReference type="SUPFAM" id="SSF116907">
    <property type="entry name" value="Hook domain"/>
    <property type="match status" value="1"/>
</dbReference>
<dbReference type="PROSITE" id="PS50021">
    <property type="entry name" value="CH"/>
    <property type="match status" value="1"/>
</dbReference>
<accession>A0A2R8QCI3</accession>
<accession>F1QG38</accession>
<accession>Q6DG47</accession>
<protein>
    <recommendedName>
        <fullName evidence="7">Protein Daple</fullName>
    </recommendedName>
    <alternativeName>
        <fullName evidence="11">Coiled-coil domain-containing protein 88C</fullName>
    </alternativeName>
</protein>
<keyword id="KW-0025">Alternative splicing</keyword>
<keyword id="KW-0965">Cell junction</keyword>
<keyword id="KW-0175">Coiled coil</keyword>
<keyword id="KW-0963">Cytoplasm</keyword>
<keyword id="KW-0344">Guanine-nucleotide releasing factor</keyword>
<keyword id="KW-1185">Reference proteome</keyword>
<keyword id="KW-0879">Wnt signaling pathway</keyword>
<comment type="function">
    <text evidence="1 6">Positive regulator of Wnt signaling, acting synergistically with dvl2 (By similarity). Functions upstream of ctnnb1/beta-catenin in the canonical Wnt pathway, and also activates jnk in the Wnt/planar cell polarity (PCP) pathway (By similarity). Acts as a non-receptor guanine nucleotide exchange factor which binds to and activates guanine nucleotide-binding protein G(i) alpha (Gi-alpha) subunits (PubMed:30948426). This promotes apical cell constriction and subsequent bending of the neural plate during neurulation via arhgef18 (By similarity).</text>
</comment>
<comment type="subcellular location">
    <subcellularLocation>
        <location evidence="2">Cytoplasm</location>
    </subcellularLocation>
    <subcellularLocation>
        <location evidence="2">Cell junction</location>
    </subcellularLocation>
    <text evidence="2">Enriched at apical cell junctions.</text>
</comment>
<comment type="alternative products">
    <event type="alternative splicing"/>
    <isoform>
        <id>A0A2R8QCI3-1</id>
        <name>1</name>
        <sequence type="displayed"/>
    </isoform>
    <isoform>
        <id>A0A2R8QCI3-2</id>
        <name>2</name>
        <sequence type="described" ref="VSP_060436"/>
    </isoform>
</comment>
<comment type="developmental stage">
    <text evidence="6">Undetectable at the gastrula stage at 7.5 hours post-fertilization (hpf) but readily observable during neurulation at 16 and 22 hpf where expression is restricted to the neural rod at 16 hpf and the neural tube at 22 and 28 hpf.</text>
</comment>
<comment type="domain">
    <text evidence="2">The GBA (G-alpha binding and activating) motif mediates binding to the alpha subunits of guanine nucleotide-binding proteins (G proteins).</text>
</comment>
<comment type="domain">
    <text evidence="2">The PDZ domain is required for localization to apical junctions.</text>
</comment>
<comment type="disruption phenotype">
    <text evidence="6">Impaired hinge point formation in the forebrain and midbrain cavities at 22 hours post-fertilization (hpf) in 95% of embryos (PubMed:30948426). Moderate curvature of the dorsal axis in 35% of embryos at 28 hpf which disappears at later stages (PubMed:30948426). Mild abnormalities in midbrain and forebrain ventricular cavities at 56 hpf (PubMed:30948426).</text>
</comment>
<comment type="similarity">
    <text evidence="8">Belongs to the CCDC88 family.</text>
</comment>
<name>DAPLE_DANRE</name>
<gene>
    <name evidence="11" type="primary">ccdc88c</name>
</gene>
<organism evidence="10">
    <name type="scientific">Danio rerio</name>
    <name type="common">Zebrafish</name>
    <name type="synonym">Brachydanio rerio</name>
    <dbReference type="NCBI Taxonomy" id="7955"/>
    <lineage>
        <taxon>Eukaryota</taxon>
        <taxon>Metazoa</taxon>
        <taxon>Chordata</taxon>
        <taxon>Craniata</taxon>
        <taxon>Vertebrata</taxon>
        <taxon>Euteleostomi</taxon>
        <taxon>Actinopterygii</taxon>
        <taxon>Neopterygii</taxon>
        <taxon>Teleostei</taxon>
        <taxon>Ostariophysi</taxon>
        <taxon>Cypriniformes</taxon>
        <taxon>Danionidae</taxon>
        <taxon>Danioninae</taxon>
        <taxon>Danio</taxon>
    </lineage>
</organism>
<proteinExistence type="evidence at transcript level"/>
<reference evidence="10" key="1">
    <citation type="journal article" date="2013" name="Nature">
        <title>The zebrafish reference genome sequence and its relationship to the human genome.</title>
        <authorList>
            <person name="Howe K."/>
            <person name="Clark M.D."/>
            <person name="Torroja C.F."/>
            <person name="Torrance J."/>
            <person name="Berthelot C."/>
            <person name="Muffato M."/>
            <person name="Collins J.E."/>
            <person name="Humphray S."/>
            <person name="McLaren K."/>
            <person name="Matthews L."/>
            <person name="McLaren S."/>
            <person name="Sealy I."/>
            <person name="Caccamo M."/>
            <person name="Churcher C."/>
            <person name="Scott C."/>
            <person name="Barrett J.C."/>
            <person name="Koch R."/>
            <person name="Rauch G.J."/>
            <person name="White S."/>
            <person name="Chow W."/>
            <person name="Kilian B."/>
            <person name="Quintais L.T."/>
            <person name="Guerra-Assuncao J.A."/>
            <person name="Zhou Y."/>
            <person name="Gu Y."/>
            <person name="Yen J."/>
            <person name="Vogel J.H."/>
            <person name="Eyre T."/>
            <person name="Redmond S."/>
            <person name="Banerjee R."/>
            <person name="Chi J."/>
            <person name="Fu B."/>
            <person name="Langley E."/>
            <person name="Maguire S.F."/>
            <person name="Laird G.K."/>
            <person name="Lloyd D."/>
            <person name="Kenyon E."/>
            <person name="Donaldson S."/>
            <person name="Sehra H."/>
            <person name="Almeida-King J."/>
            <person name="Loveland J."/>
            <person name="Trevanion S."/>
            <person name="Jones M."/>
            <person name="Quail M."/>
            <person name="Willey D."/>
            <person name="Hunt A."/>
            <person name="Burton J."/>
            <person name="Sims S."/>
            <person name="McLay K."/>
            <person name="Plumb B."/>
            <person name="Davis J."/>
            <person name="Clee C."/>
            <person name="Oliver K."/>
            <person name="Clark R."/>
            <person name="Riddle C."/>
            <person name="Elliot D."/>
            <person name="Threadgold G."/>
            <person name="Harden G."/>
            <person name="Ware D."/>
            <person name="Begum S."/>
            <person name="Mortimore B."/>
            <person name="Kerry G."/>
            <person name="Heath P."/>
            <person name="Phillimore B."/>
            <person name="Tracey A."/>
            <person name="Corby N."/>
            <person name="Dunn M."/>
            <person name="Johnson C."/>
            <person name="Wood J."/>
            <person name="Clark S."/>
            <person name="Pelan S."/>
            <person name="Griffiths G."/>
            <person name="Smith M."/>
            <person name="Glithero R."/>
            <person name="Howden P."/>
            <person name="Barker N."/>
            <person name="Lloyd C."/>
            <person name="Stevens C."/>
            <person name="Harley J."/>
            <person name="Holt K."/>
            <person name="Panagiotidis G."/>
            <person name="Lovell J."/>
            <person name="Beasley H."/>
            <person name="Henderson C."/>
            <person name="Gordon D."/>
            <person name="Auger K."/>
            <person name="Wright D."/>
            <person name="Collins J."/>
            <person name="Raisen C."/>
            <person name="Dyer L."/>
            <person name="Leung K."/>
            <person name="Robertson L."/>
            <person name="Ambridge K."/>
            <person name="Leongamornlert D."/>
            <person name="McGuire S."/>
            <person name="Gilderthorp R."/>
            <person name="Griffiths C."/>
            <person name="Manthravadi D."/>
            <person name="Nichol S."/>
            <person name="Barker G."/>
            <person name="Whitehead S."/>
            <person name="Kay M."/>
            <person name="Brown J."/>
            <person name="Murnane C."/>
            <person name="Gray E."/>
            <person name="Humphries M."/>
            <person name="Sycamore N."/>
            <person name="Barker D."/>
            <person name="Saunders D."/>
            <person name="Wallis J."/>
            <person name="Babbage A."/>
            <person name="Hammond S."/>
            <person name="Mashreghi-Mohammadi M."/>
            <person name="Barr L."/>
            <person name="Martin S."/>
            <person name="Wray P."/>
            <person name="Ellington A."/>
            <person name="Matthews N."/>
            <person name="Ellwood M."/>
            <person name="Woodmansey R."/>
            <person name="Clark G."/>
            <person name="Cooper J."/>
            <person name="Tromans A."/>
            <person name="Grafham D."/>
            <person name="Skuce C."/>
            <person name="Pandian R."/>
            <person name="Andrews R."/>
            <person name="Harrison E."/>
            <person name="Kimberley A."/>
            <person name="Garnett J."/>
            <person name="Fosker N."/>
            <person name="Hall R."/>
            <person name="Garner P."/>
            <person name="Kelly D."/>
            <person name="Bird C."/>
            <person name="Palmer S."/>
            <person name="Gehring I."/>
            <person name="Berger A."/>
            <person name="Dooley C.M."/>
            <person name="Ersan-Urun Z."/>
            <person name="Eser C."/>
            <person name="Geiger H."/>
            <person name="Geisler M."/>
            <person name="Karotki L."/>
            <person name="Kirn A."/>
            <person name="Konantz J."/>
            <person name="Konantz M."/>
            <person name="Oberlander M."/>
            <person name="Rudolph-Geiger S."/>
            <person name="Teucke M."/>
            <person name="Lanz C."/>
            <person name="Raddatz G."/>
            <person name="Osoegawa K."/>
            <person name="Zhu B."/>
            <person name="Rapp A."/>
            <person name="Widaa S."/>
            <person name="Langford C."/>
            <person name="Yang F."/>
            <person name="Schuster S.C."/>
            <person name="Carter N.P."/>
            <person name="Harrow J."/>
            <person name="Ning Z."/>
            <person name="Herrero J."/>
            <person name="Searle S.M."/>
            <person name="Enright A."/>
            <person name="Geisler R."/>
            <person name="Plasterk R.H."/>
            <person name="Lee C."/>
            <person name="Westerfield M."/>
            <person name="de Jong P.J."/>
            <person name="Zon L.I."/>
            <person name="Postlethwait J.H."/>
            <person name="Nusslein-Volhard C."/>
            <person name="Hubbard T.J."/>
            <person name="Roest Crollius H."/>
            <person name="Rogers J."/>
            <person name="Stemple D.L."/>
        </authorList>
    </citation>
    <scope>NUCLEOTIDE SEQUENCE [LARGE SCALE GENOMIC DNA]</scope>
    <source>
        <strain evidence="10">Tuebingen</strain>
    </source>
</reference>
<reference evidence="9" key="2">
    <citation type="submission" date="2004-07" db="EMBL/GenBank/DDBJ databases">
        <authorList>
            <consortium name="NIH - Zebrafish Gene Collection (ZGC) project"/>
        </authorList>
    </citation>
    <scope>NUCLEOTIDE SEQUENCE [LARGE SCALE MRNA] OF 1643-2023</scope>
</reference>
<reference evidence="8" key="3">
    <citation type="journal article" date="2019" name="J. Cell Biol.">
        <title>GPCR-independent activation of G proteins promotes apical cell constriction in vivo.</title>
        <authorList>
            <person name="Marivin A."/>
            <person name="Morozova V."/>
            <person name="Walawalkar I."/>
            <person name="Leyme A."/>
            <person name="Kretov D.A."/>
            <person name="Cifuentes D."/>
            <person name="Dominguez I."/>
            <person name="Garcia-Marcos M."/>
        </authorList>
    </citation>
    <scope>FUNCTION</scope>
    <scope>DEVELOPMENTAL STAGE</scope>
    <scope>DISRUPTION PHENOTYPE</scope>
</reference>